<evidence type="ECO:0000255" key="1">
    <source>
        <dbReference type="HAMAP-Rule" id="MF_00176"/>
    </source>
</evidence>
<keyword id="KW-0030">Aminoacyl-tRNA synthetase</keyword>
<keyword id="KW-0067">ATP-binding</keyword>
<keyword id="KW-0963">Cytoplasm</keyword>
<keyword id="KW-0436">Ligase</keyword>
<keyword id="KW-0547">Nucleotide-binding</keyword>
<keyword id="KW-0648">Protein biosynthesis</keyword>
<keyword id="KW-1185">Reference proteome</keyword>
<protein>
    <recommendedName>
        <fullName evidence="1">Serine--tRNA ligase</fullName>
        <ecNumber evidence="1">6.1.1.11</ecNumber>
    </recommendedName>
    <alternativeName>
        <fullName evidence="1">Seryl-tRNA synthetase</fullName>
        <shortName evidence="1">SerRS</shortName>
    </alternativeName>
    <alternativeName>
        <fullName evidence="1">Seryl-tRNA(Ser/Sec) synthetase</fullName>
    </alternativeName>
</protein>
<dbReference type="EC" id="6.1.1.11" evidence="1"/>
<dbReference type="EMBL" id="AE016879">
    <property type="protein sequence ID" value="AAP24069.1"/>
    <property type="molecule type" value="Genomic_DNA"/>
</dbReference>
<dbReference type="EMBL" id="AE017334">
    <property type="protein sequence ID" value="AAT29092.1"/>
    <property type="molecule type" value="Genomic_DNA"/>
</dbReference>
<dbReference type="EMBL" id="AE017225">
    <property type="protein sequence ID" value="AAT52354.1"/>
    <property type="molecule type" value="Genomic_DNA"/>
</dbReference>
<dbReference type="RefSeq" id="NP_842583.1">
    <property type="nucleotide sequence ID" value="NC_003997.3"/>
</dbReference>
<dbReference type="RefSeq" id="WP_000884181.1">
    <property type="nucleotide sequence ID" value="NZ_WXXJ01000022.1"/>
</dbReference>
<dbReference type="RefSeq" id="YP_026303.1">
    <property type="nucleotide sequence ID" value="NC_005945.1"/>
</dbReference>
<dbReference type="SMR" id="Q81W25"/>
<dbReference type="IntAct" id="Q81W25">
    <property type="interactions" value="6"/>
</dbReference>
<dbReference type="STRING" id="261594.GBAA_0012"/>
<dbReference type="DNASU" id="1083752"/>
<dbReference type="GeneID" id="69534454"/>
<dbReference type="KEGG" id="ban:BA_0012"/>
<dbReference type="KEGG" id="banh:HYU01_00090"/>
<dbReference type="KEGG" id="bar:GBAA_0012"/>
<dbReference type="KEGG" id="bat:BAS0015"/>
<dbReference type="PATRIC" id="fig|198094.11.peg.12"/>
<dbReference type="eggNOG" id="COG0172">
    <property type="taxonomic scope" value="Bacteria"/>
</dbReference>
<dbReference type="HOGENOM" id="CLU_023797_1_1_9"/>
<dbReference type="OMA" id="GYTPCFR"/>
<dbReference type="OrthoDB" id="9804647at2"/>
<dbReference type="UniPathway" id="UPA00906">
    <property type="reaction ID" value="UER00895"/>
</dbReference>
<dbReference type="Proteomes" id="UP000000427">
    <property type="component" value="Chromosome"/>
</dbReference>
<dbReference type="Proteomes" id="UP000000594">
    <property type="component" value="Chromosome"/>
</dbReference>
<dbReference type="GO" id="GO:0005737">
    <property type="term" value="C:cytoplasm"/>
    <property type="evidence" value="ECO:0007669"/>
    <property type="project" value="UniProtKB-SubCell"/>
</dbReference>
<dbReference type="GO" id="GO:0005524">
    <property type="term" value="F:ATP binding"/>
    <property type="evidence" value="ECO:0007669"/>
    <property type="project" value="UniProtKB-UniRule"/>
</dbReference>
<dbReference type="GO" id="GO:0140096">
    <property type="term" value="F:catalytic activity, acting on a protein"/>
    <property type="evidence" value="ECO:0007669"/>
    <property type="project" value="UniProtKB-ARBA"/>
</dbReference>
<dbReference type="GO" id="GO:0004828">
    <property type="term" value="F:serine-tRNA ligase activity"/>
    <property type="evidence" value="ECO:0007669"/>
    <property type="project" value="UniProtKB-UniRule"/>
</dbReference>
<dbReference type="GO" id="GO:0016740">
    <property type="term" value="F:transferase activity"/>
    <property type="evidence" value="ECO:0007669"/>
    <property type="project" value="UniProtKB-ARBA"/>
</dbReference>
<dbReference type="GO" id="GO:0016260">
    <property type="term" value="P:selenocysteine biosynthetic process"/>
    <property type="evidence" value="ECO:0007669"/>
    <property type="project" value="UniProtKB-UniRule"/>
</dbReference>
<dbReference type="GO" id="GO:0006434">
    <property type="term" value="P:seryl-tRNA aminoacylation"/>
    <property type="evidence" value="ECO:0007669"/>
    <property type="project" value="UniProtKB-UniRule"/>
</dbReference>
<dbReference type="CDD" id="cd00770">
    <property type="entry name" value="SerRS_core"/>
    <property type="match status" value="1"/>
</dbReference>
<dbReference type="Gene3D" id="3.30.930.10">
    <property type="entry name" value="Bira Bifunctional Protein, Domain 2"/>
    <property type="match status" value="1"/>
</dbReference>
<dbReference type="Gene3D" id="1.10.287.40">
    <property type="entry name" value="Serine-tRNA synthetase, tRNA binding domain"/>
    <property type="match status" value="1"/>
</dbReference>
<dbReference type="HAMAP" id="MF_00176">
    <property type="entry name" value="Ser_tRNA_synth_type1"/>
    <property type="match status" value="1"/>
</dbReference>
<dbReference type="InterPro" id="IPR002314">
    <property type="entry name" value="aa-tRNA-synt_IIb"/>
</dbReference>
<dbReference type="InterPro" id="IPR006195">
    <property type="entry name" value="aa-tRNA-synth_II"/>
</dbReference>
<dbReference type="InterPro" id="IPR045864">
    <property type="entry name" value="aa-tRNA-synth_II/BPL/LPL"/>
</dbReference>
<dbReference type="InterPro" id="IPR002317">
    <property type="entry name" value="Ser-tRNA-ligase_type_1"/>
</dbReference>
<dbReference type="InterPro" id="IPR015866">
    <property type="entry name" value="Ser-tRNA-synth_1_N"/>
</dbReference>
<dbReference type="InterPro" id="IPR042103">
    <property type="entry name" value="SerRS_1_N_sf"/>
</dbReference>
<dbReference type="InterPro" id="IPR033729">
    <property type="entry name" value="SerRS_core"/>
</dbReference>
<dbReference type="InterPro" id="IPR010978">
    <property type="entry name" value="tRNA-bd_arm"/>
</dbReference>
<dbReference type="NCBIfam" id="TIGR00414">
    <property type="entry name" value="serS"/>
    <property type="match status" value="1"/>
</dbReference>
<dbReference type="PANTHER" id="PTHR43697:SF1">
    <property type="entry name" value="SERINE--TRNA LIGASE"/>
    <property type="match status" value="1"/>
</dbReference>
<dbReference type="PANTHER" id="PTHR43697">
    <property type="entry name" value="SERYL-TRNA SYNTHETASE"/>
    <property type="match status" value="1"/>
</dbReference>
<dbReference type="Pfam" id="PF02403">
    <property type="entry name" value="Seryl_tRNA_N"/>
    <property type="match status" value="1"/>
</dbReference>
<dbReference type="Pfam" id="PF00587">
    <property type="entry name" value="tRNA-synt_2b"/>
    <property type="match status" value="1"/>
</dbReference>
<dbReference type="PIRSF" id="PIRSF001529">
    <property type="entry name" value="Ser-tRNA-synth_IIa"/>
    <property type="match status" value="1"/>
</dbReference>
<dbReference type="PRINTS" id="PR00981">
    <property type="entry name" value="TRNASYNTHSER"/>
</dbReference>
<dbReference type="SUPFAM" id="SSF55681">
    <property type="entry name" value="Class II aaRS and biotin synthetases"/>
    <property type="match status" value="1"/>
</dbReference>
<dbReference type="SUPFAM" id="SSF46589">
    <property type="entry name" value="tRNA-binding arm"/>
    <property type="match status" value="1"/>
</dbReference>
<dbReference type="PROSITE" id="PS50862">
    <property type="entry name" value="AA_TRNA_LIGASE_II"/>
    <property type="match status" value="1"/>
</dbReference>
<sequence length="424" mass="48744">MLDIKFLRTNFEEVKAKLQHRGEDLTDFGRFEELDTRRRELLVQTEELKSKRNEVSQQISVLKREKKDAEALILEMREVGEKVKDLDNELRTVEEDLERLMLSIPNIPHESAPVGETEDDNVVARTWGEVKEFAFEPKPHWDLATDLGILDFERAGKVTGSRFVFYKGAGARLERALISFMLDLHTDEHGYEEVLPPYMVNRASMTGTGQLPKFEEDAFRIESEDYFLIPTAEVPVTNMHRDEILNKEQLPIRYAAFSSCFRSEAGSAGRDTRGLIRQHQFNKVELVKFVKPEDSYEELEKLTNDAERVLQLLELPYRVMSMCTGDLGFTAAKKYDIEVWIPSYGTYREISSCSNFEAFQARRANIRFRREPNGKPEHVHTLNGSGLAIGRTVAAILENYQQEDGTIIIPEVLRPYMGGKTVIK</sequence>
<comment type="function">
    <text evidence="1">Catalyzes the attachment of serine to tRNA(Ser). Is also able to aminoacylate tRNA(Sec) with serine, to form the misacylated tRNA L-seryl-tRNA(Sec), which will be further converted into selenocysteinyl-tRNA(Sec).</text>
</comment>
<comment type="catalytic activity">
    <reaction evidence="1">
        <text>tRNA(Ser) + L-serine + ATP = L-seryl-tRNA(Ser) + AMP + diphosphate + H(+)</text>
        <dbReference type="Rhea" id="RHEA:12292"/>
        <dbReference type="Rhea" id="RHEA-COMP:9669"/>
        <dbReference type="Rhea" id="RHEA-COMP:9703"/>
        <dbReference type="ChEBI" id="CHEBI:15378"/>
        <dbReference type="ChEBI" id="CHEBI:30616"/>
        <dbReference type="ChEBI" id="CHEBI:33019"/>
        <dbReference type="ChEBI" id="CHEBI:33384"/>
        <dbReference type="ChEBI" id="CHEBI:78442"/>
        <dbReference type="ChEBI" id="CHEBI:78533"/>
        <dbReference type="ChEBI" id="CHEBI:456215"/>
        <dbReference type="EC" id="6.1.1.11"/>
    </reaction>
</comment>
<comment type="catalytic activity">
    <reaction evidence="1">
        <text>tRNA(Sec) + L-serine + ATP = L-seryl-tRNA(Sec) + AMP + diphosphate + H(+)</text>
        <dbReference type="Rhea" id="RHEA:42580"/>
        <dbReference type="Rhea" id="RHEA-COMP:9742"/>
        <dbReference type="Rhea" id="RHEA-COMP:10128"/>
        <dbReference type="ChEBI" id="CHEBI:15378"/>
        <dbReference type="ChEBI" id="CHEBI:30616"/>
        <dbReference type="ChEBI" id="CHEBI:33019"/>
        <dbReference type="ChEBI" id="CHEBI:33384"/>
        <dbReference type="ChEBI" id="CHEBI:78442"/>
        <dbReference type="ChEBI" id="CHEBI:78533"/>
        <dbReference type="ChEBI" id="CHEBI:456215"/>
        <dbReference type="EC" id="6.1.1.11"/>
    </reaction>
</comment>
<comment type="pathway">
    <text evidence="1">Aminoacyl-tRNA biosynthesis; selenocysteinyl-tRNA(Sec) biosynthesis; L-seryl-tRNA(Sec) from L-serine and tRNA(Sec): step 1/1.</text>
</comment>
<comment type="subunit">
    <text evidence="1">Homodimer. The tRNA molecule binds across the dimer.</text>
</comment>
<comment type="subcellular location">
    <subcellularLocation>
        <location evidence="1">Cytoplasm</location>
    </subcellularLocation>
</comment>
<comment type="domain">
    <text evidence="1">Consists of two distinct domains, a catalytic core and a N-terminal extension that is involved in tRNA binding.</text>
</comment>
<comment type="similarity">
    <text evidence="1">Belongs to the class-II aminoacyl-tRNA synthetase family. Type-1 seryl-tRNA synthetase subfamily.</text>
</comment>
<accession>Q81W25</accession>
<accession>Q6I527</accession>
<accession>Q6KYS1</accession>
<name>SYS_BACAN</name>
<gene>
    <name evidence="1" type="primary">serS</name>
    <name type="ordered locus">BA_0012</name>
    <name type="ordered locus">GBAA_0012</name>
    <name type="ordered locus">BAS0015</name>
</gene>
<reference key="1">
    <citation type="journal article" date="2003" name="Nature">
        <title>The genome sequence of Bacillus anthracis Ames and comparison to closely related bacteria.</title>
        <authorList>
            <person name="Read T.D."/>
            <person name="Peterson S.N."/>
            <person name="Tourasse N.J."/>
            <person name="Baillie L.W."/>
            <person name="Paulsen I.T."/>
            <person name="Nelson K.E."/>
            <person name="Tettelin H."/>
            <person name="Fouts D.E."/>
            <person name="Eisen J.A."/>
            <person name="Gill S.R."/>
            <person name="Holtzapple E.K."/>
            <person name="Okstad O.A."/>
            <person name="Helgason E."/>
            <person name="Rilstone J."/>
            <person name="Wu M."/>
            <person name="Kolonay J.F."/>
            <person name="Beanan M.J."/>
            <person name="Dodson R.J."/>
            <person name="Brinkac L.M."/>
            <person name="Gwinn M.L."/>
            <person name="DeBoy R.T."/>
            <person name="Madpu R."/>
            <person name="Daugherty S.C."/>
            <person name="Durkin A.S."/>
            <person name="Haft D.H."/>
            <person name="Nelson W.C."/>
            <person name="Peterson J.D."/>
            <person name="Pop M."/>
            <person name="Khouri H.M."/>
            <person name="Radune D."/>
            <person name="Benton J.L."/>
            <person name="Mahamoud Y."/>
            <person name="Jiang L."/>
            <person name="Hance I.R."/>
            <person name="Weidman J.F."/>
            <person name="Berry K.J."/>
            <person name="Plaut R.D."/>
            <person name="Wolf A.M."/>
            <person name="Watkins K.L."/>
            <person name="Nierman W.C."/>
            <person name="Hazen A."/>
            <person name="Cline R.T."/>
            <person name="Redmond C."/>
            <person name="Thwaite J.E."/>
            <person name="White O."/>
            <person name="Salzberg S.L."/>
            <person name="Thomason B."/>
            <person name="Friedlander A.M."/>
            <person name="Koehler T.M."/>
            <person name="Hanna P.C."/>
            <person name="Kolstoe A.-B."/>
            <person name="Fraser C.M."/>
        </authorList>
    </citation>
    <scope>NUCLEOTIDE SEQUENCE [LARGE SCALE GENOMIC DNA]</scope>
    <source>
        <strain>Ames / isolate Porton</strain>
    </source>
</reference>
<reference key="2">
    <citation type="journal article" date="2009" name="J. Bacteriol.">
        <title>The complete genome sequence of Bacillus anthracis Ames 'Ancestor'.</title>
        <authorList>
            <person name="Ravel J."/>
            <person name="Jiang L."/>
            <person name="Stanley S.T."/>
            <person name="Wilson M.R."/>
            <person name="Decker R.S."/>
            <person name="Read T.D."/>
            <person name="Worsham P."/>
            <person name="Keim P.S."/>
            <person name="Salzberg S.L."/>
            <person name="Fraser-Liggett C.M."/>
            <person name="Rasko D.A."/>
        </authorList>
    </citation>
    <scope>NUCLEOTIDE SEQUENCE [LARGE SCALE GENOMIC DNA]</scope>
    <source>
        <strain>Ames ancestor</strain>
    </source>
</reference>
<reference key="3">
    <citation type="submission" date="2004-01" db="EMBL/GenBank/DDBJ databases">
        <title>Complete genome sequence of Bacillus anthracis Sterne.</title>
        <authorList>
            <person name="Brettin T.S."/>
            <person name="Bruce D."/>
            <person name="Challacombe J.F."/>
            <person name="Gilna P."/>
            <person name="Han C."/>
            <person name="Hill K."/>
            <person name="Hitchcock P."/>
            <person name="Jackson P."/>
            <person name="Keim P."/>
            <person name="Longmire J."/>
            <person name="Lucas S."/>
            <person name="Okinaka R."/>
            <person name="Richardson P."/>
            <person name="Rubin E."/>
            <person name="Tice H."/>
        </authorList>
    </citation>
    <scope>NUCLEOTIDE SEQUENCE [LARGE SCALE GENOMIC DNA]</scope>
    <source>
        <strain>Sterne</strain>
    </source>
</reference>
<organism>
    <name type="scientific">Bacillus anthracis</name>
    <dbReference type="NCBI Taxonomy" id="1392"/>
    <lineage>
        <taxon>Bacteria</taxon>
        <taxon>Bacillati</taxon>
        <taxon>Bacillota</taxon>
        <taxon>Bacilli</taxon>
        <taxon>Bacillales</taxon>
        <taxon>Bacillaceae</taxon>
        <taxon>Bacillus</taxon>
        <taxon>Bacillus cereus group</taxon>
    </lineage>
</organism>
<proteinExistence type="inferred from homology"/>
<feature type="chain" id="PRO_0000121997" description="Serine--tRNA ligase">
    <location>
        <begin position="1"/>
        <end position="424"/>
    </location>
</feature>
<feature type="binding site" evidence="1">
    <location>
        <begin position="231"/>
        <end position="233"/>
    </location>
    <ligand>
        <name>L-serine</name>
        <dbReference type="ChEBI" id="CHEBI:33384"/>
    </ligand>
</feature>
<feature type="binding site" evidence="1">
    <location>
        <begin position="262"/>
        <end position="264"/>
    </location>
    <ligand>
        <name>ATP</name>
        <dbReference type="ChEBI" id="CHEBI:30616"/>
    </ligand>
</feature>
<feature type="binding site" evidence="1">
    <location>
        <position position="285"/>
    </location>
    <ligand>
        <name>L-serine</name>
        <dbReference type="ChEBI" id="CHEBI:33384"/>
    </ligand>
</feature>
<feature type="binding site" evidence="1">
    <location>
        <begin position="349"/>
        <end position="352"/>
    </location>
    <ligand>
        <name>ATP</name>
        <dbReference type="ChEBI" id="CHEBI:30616"/>
    </ligand>
</feature>
<feature type="binding site" evidence="1">
    <location>
        <position position="385"/>
    </location>
    <ligand>
        <name>L-serine</name>
        <dbReference type="ChEBI" id="CHEBI:33384"/>
    </ligand>
</feature>